<sequence length="118" mass="12894">MISKPDKNKIRQKRHRRVRGKLSGTADRPRLNIFRSNTGIYAQVIDDVAGVTLASASTLDKEVSKGTKTEQAVVVGKLVAERAVAKGISEVVFDRGGYLYHGRVKALADAARENGLKF</sequence>
<protein>
    <recommendedName>
        <fullName evidence="1">Large ribosomal subunit protein uL18</fullName>
    </recommendedName>
    <alternativeName>
        <fullName evidence="3">50S ribosomal protein L18</fullName>
    </alternativeName>
</protein>
<dbReference type="EMBL" id="AE014133">
    <property type="protein sequence ID" value="AAN59614.1"/>
    <property type="molecule type" value="Genomic_DNA"/>
</dbReference>
<dbReference type="RefSeq" id="NP_722308.1">
    <property type="nucleotide sequence ID" value="NC_004350.2"/>
</dbReference>
<dbReference type="RefSeq" id="WP_002262324.1">
    <property type="nucleotide sequence ID" value="NC_004350.2"/>
</dbReference>
<dbReference type="SMR" id="Q8DS29"/>
<dbReference type="STRING" id="210007.SMU_2010"/>
<dbReference type="GeneID" id="93860213"/>
<dbReference type="KEGG" id="smu:SMU_2010"/>
<dbReference type="PATRIC" id="fig|210007.7.peg.1791"/>
<dbReference type="eggNOG" id="COG0256">
    <property type="taxonomic scope" value="Bacteria"/>
</dbReference>
<dbReference type="HOGENOM" id="CLU_098841_0_1_9"/>
<dbReference type="OrthoDB" id="9810939at2"/>
<dbReference type="PhylomeDB" id="Q8DS29"/>
<dbReference type="Proteomes" id="UP000002512">
    <property type="component" value="Chromosome"/>
</dbReference>
<dbReference type="GO" id="GO:0022625">
    <property type="term" value="C:cytosolic large ribosomal subunit"/>
    <property type="evidence" value="ECO:0007669"/>
    <property type="project" value="TreeGrafter"/>
</dbReference>
<dbReference type="GO" id="GO:0008097">
    <property type="term" value="F:5S rRNA binding"/>
    <property type="evidence" value="ECO:0007669"/>
    <property type="project" value="TreeGrafter"/>
</dbReference>
<dbReference type="GO" id="GO:0003735">
    <property type="term" value="F:structural constituent of ribosome"/>
    <property type="evidence" value="ECO:0007669"/>
    <property type="project" value="InterPro"/>
</dbReference>
<dbReference type="GO" id="GO:0006412">
    <property type="term" value="P:translation"/>
    <property type="evidence" value="ECO:0007669"/>
    <property type="project" value="UniProtKB-UniRule"/>
</dbReference>
<dbReference type="CDD" id="cd00432">
    <property type="entry name" value="Ribosomal_L18_L5e"/>
    <property type="match status" value="1"/>
</dbReference>
<dbReference type="FunFam" id="3.30.420.100:FF:000001">
    <property type="entry name" value="50S ribosomal protein L18"/>
    <property type="match status" value="1"/>
</dbReference>
<dbReference type="Gene3D" id="3.30.420.100">
    <property type="match status" value="1"/>
</dbReference>
<dbReference type="HAMAP" id="MF_01337_B">
    <property type="entry name" value="Ribosomal_uL18_B"/>
    <property type="match status" value="1"/>
</dbReference>
<dbReference type="InterPro" id="IPR004389">
    <property type="entry name" value="Ribosomal_uL18_bac-type"/>
</dbReference>
<dbReference type="InterPro" id="IPR005484">
    <property type="entry name" value="Ribosomal_uL18_bac/euk"/>
</dbReference>
<dbReference type="NCBIfam" id="TIGR00060">
    <property type="entry name" value="L18_bact"/>
    <property type="match status" value="1"/>
</dbReference>
<dbReference type="PANTHER" id="PTHR12899">
    <property type="entry name" value="39S RIBOSOMAL PROTEIN L18, MITOCHONDRIAL"/>
    <property type="match status" value="1"/>
</dbReference>
<dbReference type="PANTHER" id="PTHR12899:SF3">
    <property type="entry name" value="LARGE RIBOSOMAL SUBUNIT PROTEIN UL18M"/>
    <property type="match status" value="1"/>
</dbReference>
<dbReference type="Pfam" id="PF00861">
    <property type="entry name" value="Ribosomal_L18p"/>
    <property type="match status" value="1"/>
</dbReference>
<dbReference type="SUPFAM" id="SSF53137">
    <property type="entry name" value="Translational machinery components"/>
    <property type="match status" value="1"/>
</dbReference>
<organism>
    <name type="scientific">Streptococcus mutans serotype c (strain ATCC 700610 / UA159)</name>
    <dbReference type="NCBI Taxonomy" id="210007"/>
    <lineage>
        <taxon>Bacteria</taxon>
        <taxon>Bacillati</taxon>
        <taxon>Bacillota</taxon>
        <taxon>Bacilli</taxon>
        <taxon>Lactobacillales</taxon>
        <taxon>Streptococcaceae</taxon>
        <taxon>Streptococcus</taxon>
    </lineage>
</organism>
<gene>
    <name evidence="1" type="primary">rplR</name>
    <name type="synonym">rl18</name>
    <name type="ordered locus">SMU_2010</name>
</gene>
<reference key="1">
    <citation type="journal article" date="2002" name="Proc. Natl. Acad. Sci. U.S.A.">
        <title>Genome sequence of Streptococcus mutans UA159, a cariogenic dental pathogen.</title>
        <authorList>
            <person name="Ajdic D.J."/>
            <person name="McShan W.M."/>
            <person name="McLaughlin R.E."/>
            <person name="Savic G."/>
            <person name="Chang J."/>
            <person name="Carson M.B."/>
            <person name="Primeaux C."/>
            <person name="Tian R."/>
            <person name="Kenton S."/>
            <person name="Jia H.G."/>
            <person name="Lin S.P."/>
            <person name="Qian Y."/>
            <person name="Li S."/>
            <person name="Zhu H."/>
            <person name="Najar F.Z."/>
            <person name="Lai H."/>
            <person name="White J."/>
            <person name="Roe B.A."/>
            <person name="Ferretti J.J."/>
        </authorList>
    </citation>
    <scope>NUCLEOTIDE SEQUENCE [LARGE SCALE GENOMIC DNA]</scope>
    <source>
        <strain>ATCC 700610 / UA159</strain>
    </source>
</reference>
<evidence type="ECO:0000255" key="1">
    <source>
        <dbReference type="HAMAP-Rule" id="MF_01337"/>
    </source>
</evidence>
<evidence type="ECO:0000256" key="2">
    <source>
        <dbReference type="SAM" id="MobiDB-lite"/>
    </source>
</evidence>
<evidence type="ECO:0000305" key="3"/>
<accession>Q8DS29</accession>
<keyword id="KW-1185">Reference proteome</keyword>
<keyword id="KW-0687">Ribonucleoprotein</keyword>
<keyword id="KW-0689">Ribosomal protein</keyword>
<keyword id="KW-0694">RNA-binding</keyword>
<keyword id="KW-0699">rRNA-binding</keyword>
<feature type="chain" id="PRO_0000131356" description="Large ribosomal subunit protein uL18">
    <location>
        <begin position="1"/>
        <end position="118"/>
    </location>
</feature>
<feature type="region of interest" description="Disordered" evidence="2">
    <location>
        <begin position="1"/>
        <end position="24"/>
    </location>
</feature>
<feature type="compositionally biased region" description="Basic residues" evidence="2">
    <location>
        <begin position="10"/>
        <end position="20"/>
    </location>
</feature>
<comment type="function">
    <text evidence="1">This is one of the proteins that bind and probably mediate the attachment of the 5S RNA into the large ribosomal subunit, where it forms part of the central protuberance.</text>
</comment>
<comment type="subunit">
    <text evidence="1">Part of the 50S ribosomal subunit; part of the 5S rRNA/L5/L18/L25 subcomplex. Contacts the 5S and 23S rRNAs.</text>
</comment>
<comment type="similarity">
    <text evidence="1">Belongs to the universal ribosomal protein uL18 family.</text>
</comment>
<name>RL18_STRMU</name>
<proteinExistence type="inferred from homology"/>